<sequence>MSQQNGNVNRVGAQDRVGASGGMEHSFGFKAVDENEKQGLVNDVFHKVAKRYDIMNDLMSAGMHRVWKDAMVAWLAPSKRPGWTSLDVAGGTGDIAFRIVEASGRQAHVTILDINGSMLGVGRERAIKKGLIDNLEFVEANAEELPFEDNSFDAYTIAFGIRNVPHIDKALSEAYRVLKPGGRFLCLEFSEVELPVLDKVYDEWSFRAIPRIGKMITGDADSYSYLVESIRKFPKQQDFAAMIEKAGFERVSYRNFTGGIAALHSGWKL</sequence>
<protein>
    <recommendedName>
        <fullName evidence="1">Ubiquinone/menaquinone biosynthesis C-methyltransferase UbiE</fullName>
        <ecNumber evidence="1">2.1.1.163</ecNumber>
        <ecNumber evidence="1">2.1.1.201</ecNumber>
    </recommendedName>
    <alternativeName>
        <fullName evidence="1">2-methoxy-6-polyprenyl-1,4-benzoquinol methylase</fullName>
    </alternativeName>
    <alternativeName>
        <fullName evidence="1">Demethylmenaquinone methyltransferase</fullName>
    </alternativeName>
</protein>
<evidence type="ECO:0000255" key="1">
    <source>
        <dbReference type="HAMAP-Rule" id="MF_01813"/>
    </source>
</evidence>
<comment type="function">
    <text evidence="1">Methyltransferase required for the conversion of demethylmenaquinol (DMKH2) to menaquinol (MKH2) and the conversion of 2-polyprenyl-6-methoxy-1,4-benzoquinol (DDMQH2) to 2-polyprenyl-3-methyl-6-methoxy-1,4-benzoquinol (DMQH2).</text>
</comment>
<comment type="catalytic activity">
    <reaction evidence="1">
        <text>a 2-demethylmenaquinol + S-adenosyl-L-methionine = a menaquinol + S-adenosyl-L-homocysteine + H(+)</text>
        <dbReference type="Rhea" id="RHEA:42640"/>
        <dbReference type="Rhea" id="RHEA-COMP:9539"/>
        <dbReference type="Rhea" id="RHEA-COMP:9563"/>
        <dbReference type="ChEBI" id="CHEBI:15378"/>
        <dbReference type="ChEBI" id="CHEBI:18151"/>
        <dbReference type="ChEBI" id="CHEBI:55437"/>
        <dbReference type="ChEBI" id="CHEBI:57856"/>
        <dbReference type="ChEBI" id="CHEBI:59789"/>
        <dbReference type="EC" id="2.1.1.163"/>
    </reaction>
</comment>
<comment type="catalytic activity">
    <reaction evidence="1">
        <text>a 2-methoxy-6-(all-trans-polyprenyl)benzene-1,4-diol + S-adenosyl-L-methionine = a 5-methoxy-2-methyl-3-(all-trans-polyprenyl)benzene-1,4-diol + S-adenosyl-L-homocysteine + H(+)</text>
        <dbReference type="Rhea" id="RHEA:28286"/>
        <dbReference type="Rhea" id="RHEA-COMP:10858"/>
        <dbReference type="Rhea" id="RHEA-COMP:10859"/>
        <dbReference type="ChEBI" id="CHEBI:15378"/>
        <dbReference type="ChEBI" id="CHEBI:57856"/>
        <dbReference type="ChEBI" id="CHEBI:59789"/>
        <dbReference type="ChEBI" id="CHEBI:84166"/>
        <dbReference type="ChEBI" id="CHEBI:84167"/>
        <dbReference type="EC" id="2.1.1.201"/>
    </reaction>
</comment>
<comment type="pathway">
    <text evidence="1">Quinol/quinone metabolism; menaquinone biosynthesis; menaquinol from 1,4-dihydroxy-2-naphthoate: step 2/2.</text>
</comment>
<comment type="pathway">
    <text evidence="1">Cofactor biosynthesis; ubiquinone biosynthesis.</text>
</comment>
<comment type="similarity">
    <text evidence="1">Belongs to the class I-like SAM-binding methyltransferase superfamily. MenG/UbiE family.</text>
</comment>
<feature type="chain" id="PRO_1000187734" description="Ubiquinone/menaquinone biosynthesis C-methyltransferase UbiE">
    <location>
        <begin position="1"/>
        <end position="269"/>
    </location>
</feature>
<feature type="binding site" evidence="1">
    <location>
        <position position="92"/>
    </location>
    <ligand>
        <name>S-adenosyl-L-methionine</name>
        <dbReference type="ChEBI" id="CHEBI:59789"/>
    </ligand>
</feature>
<feature type="binding site" evidence="1">
    <location>
        <position position="113"/>
    </location>
    <ligand>
        <name>S-adenosyl-L-methionine</name>
        <dbReference type="ChEBI" id="CHEBI:59789"/>
    </ligand>
</feature>
<feature type="binding site" evidence="1">
    <location>
        <begin position="141"/>
        <end position="142"/>
    </location>
    <ligand>
        <name>S-adenosyl-L-methionine</name>
        <dbReference type="ChEBI" id="CHEBI:59789"/>
    </ligand>
</feature>
<organism>
    <name type="scientific">Brucella abortus (strain S19)</name>
    <dbReference type="NCBI Taxonomy" id="430066"/>
    <lineage>
        <taxon>Bacteria</taxon>
        <taxon>Pseudomonadati</taxon>
        <taxon>Pseudomonadota</taxon>
        <taxon>Alphaproteobacteria</taxon>
        <taxon>Hyphomicrobiales</taxon>
        <taxon>Brucellaceae</taxon>
        <taxon>Brucella/Ochrobactrum group</taxon>
        <taxon>Brucella</taxon>
    </lineage>
</organism>
<accession>B2SC50</accession>
<keyword id="KW-0474">Menaquinone biosynthesis</keyword>
<keyword id="KW-0489">Methyltransferase</keyword>
<keyword id="KW-0949">S-adenosyl-L-methionine</keyword>
<keyword id="KW-0808">Transferase</keyword>
<keyword id="KW-0831">Ubiquinone biosynthesis</keyword>
<reference key="1">
    <citation type="journal article" date="2008" name="PLoS ONE">
        <title>Genome sequence of Brucella abortus vaccine strain S19 compared to virulent strains yields candidate virulence genes.</title>
        <authorList>
            <person name="Crasta O.R."/>
            <person name="Folkerts O."/>
            <person name="Fei Z."/>
            <person name="Mane S.P."/>
            <person name="Evans C."/>
            <person name="Martino-Catt S."/>
            <person name="Bricker B."/>
            <person name="Yu G."/>
            <person name="Du L."/>
            <person name="Sobral B.W."/>
        </authorList>
    </citation>
    <scope>NUCLEOTIDE SEQUENCE [LARGE SCALE GENOMIC DNA]</scope>
    <source>
        <strain>S19</strain>
    </source>
</reference>
<name>UBIE_BRUA1</name>
<dbReference type="EC" id="2.1.1.163" evidence="1"/>
<dbReference type="EC" id="2.1.1.201" evidence="1"/>
<dbReference type="EMBL" id="CP000888">
    <property type="protein sequence ID" value="ACD74437.1"/>
    <property type="molecule type" value="Genomic_DNA"/>
</dbReference>
<dbReference type="RefSeq" id="WP_002965588.1">
    <property type="nucleotide sequence ID" value="NC_010740.1"/>
</dbReference>
<dbReference type="SMR" id="B2SC50"/>
<dbReference type="GeneID" id="97534890"/>
<dbReference type="KEGG" id="bmc:BAbS19_II09540"/>
<dbReference type="HOGENOM" id="CLU_037990_0_0_5"/>
<dbReference type="UniPathway" id="UPA00079">
    <property type="reaction ID" value="UER00169"/>
</dbReference>
<dbReference type="UniPathway" id="UPA00232"/>
<dbReference type="Proteomes" id="UP000002565">
    <property type="component" value="Chromosome 2"/>
</dbReference>
<dbReference type="GO" id="GO:0008425">
    <property type="term" value="F:2-methoxy-6-polyprenyl-1,4-benzoquinol methyltransferase activity"/>
    <property type="evidence" value="ECO:0007669"/>
    <property type="project" value="UniProtKB-UniRule"/>
</dbReference>
<dbReference type="GO" id="GO:0043770">
    <property type="term" value="F:demethylmenaquinone methyltransferase activity"/>
    <property type="evidence" value="ECO:0007669"/>
    <property type="project" value="UniProtKB-UniRule"/>
</dbReference>
<dbReference type="GO" id="GO:0009060">
    <property type="term" value="P:aerobic respiration"/>
    <property type="evidence" value="ECO:0007669"/>
    <property type="project" value="UniProtKB-UniRule"/>
</dbReference>
<dbReference type="GO" id="GO:0009234">
    <property type="term" value="P:menaquinone biosynthetic process"/>
    <property type="evidence" value="ECO:0007669"/>
    <property type="project" value="UniProtKB-UniRule"/>
</dbReference>
<dbReference type="GO" id="GO:0032259">
    <property type="term" value="P:methylation"/>
    <property type="evidence" value="ECO:0007669"/>
    <property type="project" value="UniProtKB-KW"/>
</dbReference>
<dbReference type="CDD" id="cd02440">
    <property type="entry name" value="AdoMet_MTases"/>
    <property type="match status" value="1"/>
</dbReference>
<dbReference type="FunFam" id="3.40.50.150:FF:000064">
    <property type="entry name" value="2-methoxy-6-polyprenyl-1,4-benzoquinol methylase, mitochondrial"/>
    <property type="match status" value="1"/>
</dbReference>
<dbReference type="Gene3D" id="3.40.50.150">
    <property type="entry name" value="Vaccinia Virus protein VP39"/>
    <property type="match status" value="1"/>
</dbReference>
<dbReference type="HAMAP" id="MF_01813">
    <property type="entry name" value="MenG_UbiE_methyltr"/>
    <property type="match status" value="1"/>
</dbReference>
<dbReference type="InterPro" id="IPR029063">
    <property type="entry name" value="SAM-dependent_MTases_sf"/>
</dbReference>
<dbReference type="InterPro" id="IPR004033">
    <property type="entry name" value="UbiE/COQ5_MeTrFase"/>
</dbReference>
<dbReference type="InterPro" id="IPR023576">
    <property type="entry name" value="UbiE/COQ5_MeTrFase_CS"/>
</dbReference>
<dbReference type="NCBIfam" id="TIGR01934">
    <property type="entry name" value="MenG_MenH_UbiE"/>
    <property type="match status" value="1"/>
</dbReference>
<dbReference type="NCBIfam" id="NF001242">
    <property type="entry name" value="PRK00216.1-3"/>
    <property type="match status" value="1"/>
</dbReference>
<dbReference type="NCBIfam" id="NF001244">
    <property type="entry name" value="PRK00216.1-5"/>
    <property type="match status" value="1"/>
</dbReference>
<dbReference type="PANTHER" id="PTHR43591:SF24">
    <property type="entry name" value="2-METHOXY-6-POLYPRENYL-1,4-BENZOQUINOL METHYLASE, MITOCHONDRIAL"/>
    <property type="match status" value="1"/>
</dbReference>
<dbReference type="PANTHER" id="PTHR43591">
    <property type="entry name" value="METHYLTRANSFERASE"/>
    <property type="match status" value="1"/>
</dbReference>
<dbReference type="Pfam" id="PF01209">
    <property type="entry name" value="Ubie_methyltran"/>
    <property type="match status" value="1"/>
</dbReference>
<dbReference type="SUPFAM" id="SSF53335">
    <property type="entry name" value="S-adenosyl-L-methionine-dependent methyltransferases"/>
    <property type="match status" value="1"/>
</dbReference>
<dbReference type="PROSITE" id="PS51608">
    <property type="entry name" value="SAM_MT_UBIE"/>
    <property type="match status" value="1"/>
</dbReference>
<dbReference type="PROSITE" id="PS01183">
    <property type="entry name" value="UBIE_1"/>
    <property type="match status" value="1"/>
</dbReference>
<dbReference type="PROSITE" id="PS01184">
    <property type="entry name" value="UBIE_2"/>
    <property type="match status" value="1"/>
</dbReference>
<gene>
    <name evidence="1" type="primary">ubiE</name>
    <name type="ordered locus">BAbS19_II09540</name>
</gene>
<proteinExistence type="inferred from homology"/>